<protein>
    <recommendedName>
        <fullName evidence="2">DNA-directed RNA polymerase subunit omega</fullName>
        <shortName evidence="2">RNAP omega subunit</shortName>
        <ecNumber evidence="2">2.7.7.6</ecNumber>
    </recommendedName>
    <alternativeName>
        <fullName evidence="2">RNA polymerase omega subunit</fullName>
    </alternativeName>
    <alternativeName>
        <fullName evidence="2">Transcriptase subunit omega</fullName>
    </alternativeName>
</protein>
<accession>Q7VHY0</accession>
<comment type="function">
    <text evidence="2">Promotes RNA polymerase assembly. Latches the N- and C-terminal regions of the beta' subunit thereby facilitating its interaction with the beta and alpha subunits.</text>
</comment>
<comment type="catalytic activity">
    <reaction evidence="2">
        <text>RNA(n) + a ribonucleoside 5'-triphosphate = RNA(n+1) + diphosphate</text>
        <dbReference type="Rhea" id="RHEA:21248"/>
        <dbReference type="Rhea" id="RHEA-COMP:14527"/>
        <dbReference type="Rhea" id="RHEA-COMP:17342"/>
        <dbReference type="ChEBI" id="CHEBI:33019"/>
        <dbReference type="ChEBI" id="CHEBI:61557"/>
        <dbReference type="ChEBI" id="CHEBI:140395"/>
        <dbReference type="EC" id="2.7.7.6"/>
    </reaction>
</comment>
<comment type="subunit">
    <text evidence="1">The RNAP catalytic core consists of 2 alpha, 1 beta/beta' and 1 omega subunit. When a sigma factor is associated with the core the holoenzyme is formed, which can initiate transcription (By similarity).</text>
</comment>
<comment type="similarity">
    <text evidence="2">Belongs to the RNA polymerase subunit omega family.</text>
</comment>
<dbReference type="EC" id="2.7.7.6" evidence="2"/>
<dbReference type="EMBL" id="AE017125">
    <property type="protein sequence ID" value="AAP77429.1"/>
    <property type="molecule type" value="Genomic_DNA"/>
</dbReference>
<dbReference type="RefSeq" id="WP_011115672.1">
    <property type="nucleotide sequence ID" value="NC_004917.1"/>
</dbReference>
<dbReference type="SMR" id="Q7VHY0"/>
<dbReference type="STRING" id="235279.HH_0832"/>
<dbReference type="KEGG" id="hhe:HH_0832"/>
<dbReference type="eggNOG" id="COG1758">
    <property type="taxonomic scope" value="Bacteria"/>
</dbReference>
<dbReference type="HOGENOM" id="CLU_125406_3_0_7"/>
<dbReference type="OrthoDB" id="5334728at2"/>
<dbReference type="Proteomes" id="UP000002495">
    <property type="component" value="Chromosome"/>
</dbReference>
<dbReference type="GO" id="GO:0000428">
    <property type="term" value="C:DNA-directed RNA polymerase complex"/>
    <property type="evidence" value="ECO:0007669"/>
    <property type="project" value="UniProtKB-KW"/>
</dbReference>
<dbReference type="GO" id="GO:0003677">
    <property type="term" value="F:DNA binding"/>
    <property type="evidence" value="ECO:0007669"/>
    <property type="project" value="UniProtKB-UniRule"/>
</dbReference>
<dbReference type="GO" id="GO:0003899">
    <property type="term" value="F:DNA-directed RNA polymerase activity"/>
    <property type="evidence" value="ECO:0007669"/>
    <property type="project" value="UniProtKB-UniRule"/>
</dbReference>
<dbReference type="GO" id="GO:0006351">
    <property type="term" value="P:DNA-templated transcription"/>
    <property type="evidence" value="ECO:0007669"/>
    <property type="project" value="UniProtKB-UniRule"/>
</dbReference>
<dbReference type="Gene3D" id="3.90.940.10">
    <property type="match status" value="1"/>
</dbReference>
<dbReference type="HAMAP" id="MF_00366">
    <property type="entry name" value="RNApol_bact_RpoZ"/>
    <property type="match status" value="1"/>
</dbReference>
<dbReference type="InterPro" id="IPR003716">
    <property type="entry name" value="DNA-dir_RNA_pol_omega"/>
</dbReference>
<dbReference type="InterPro" id="IPR006110">
    <property type="entry name" value="Pol_omega/Rpo6/RPB6"/>
</dbReference>
<dbReference type="InterPro" id="IPR036161">
    <property type="entry name" value="RPB6/omega-like_sf"/>
</dbReference>
<dbReference type="NCBIfam" id="NF001579">
    <property type="entry name" value="PRK00392.6-2"/>
    <property type="match status" value="1"/>
</dbReference>
<dbReference type="Pfam" id="PF01192">
    <property type="entry name" value="RNA_pol_Rpb6"/>
    <property type="match status" value="1"/>
</dbReference>
<dbReference type="SMART" id="SM01409">
    <property type="entry name" value="RNA_pol_Rpb6"/>
    <property type="match status" value="1"/>
</dbReference>
<dbReference type="SUPFAM" id="SSF63562">
    <property type="entry name" value="RPB6/omega subunit-like"/>
    <property type="match status" value="1"/>
</dbReference>
<name>RPOZ_HELHP</name>
<organism>
    <name type="scientific">Helicobacter hepaticus (strain ATCC 51449 / 3B1)</name>
    <dbReference type="NCBI Taxonomy" id="235279"/>
    <lineage>
        <taxon>Bacteria</taxon>
        <taxon>Pseudomonadati</taxon>
        <taxon>Campylobacterota</taxon>
        <taxon>Epsilonproteobacteria</taxon>
        <taxon>Campylobacterales</taxon>
        <taxon>Helicobacteraceae</taxon>
        <taxon>Helicobacter</taxon>
    </lineage>
</organism>
<feature type="chain" id="PRO_0000128942" description="DNA-directed RNA polymerase subunit omega">
    <location>
        <begin position="1"/>
        <end position="74"/>
    </location>
</feature>
<proteinExistence type="inferred from homology"/>
<evidence type="ECO:0000250" key="1"/>
<evidence type="ECO:0000255" key="2">
    <source>
        <dbReference type="HAMAP-Rule" id="MF_00366"/>
    </source>
</evidence>
<sequence>MDTLRTEEIAAKALKRVHNDRYLLASLIFERVKELGEGAKPLVDMDVKTYKLPDIAMREIAEGKVELTSIEDRE</sequence>
<reference key="1">
    <citation type="journal article" date="2003" name="Proc. Natl. Acad. Sci. U.S.A.">
        <title>The complete genome sequence of the carcinogenic bacterium Helicobacter hepaticus.</title>
        <authorList>
            <person name="Suerbaum S."/>
            <person name="Josenhans C."/>
            <person name="Sterzenbach T."/>
            <person name="Drescher B."/>
            <person name="Brandt P."/>
            <person name="Bell M."/>
            <person name="Droege M."/>
            <person name="Fartmann B."/>
            <person name="Fischer H.-P."/>
            <person name="Ge Z."/>
            <person name="Hoerster A."/>
            <person name="Holland R."/>
            <person name="Klein K."/>
            <person name="Koenig J."/>
            <person name="Macko L."/>
            <person name="Mendz G.L."/>
            <person name="Nyakatura G."/>
            <person name="Schauer D.B."/>
            <person name="Shen Z."/>
            <person name="Weber J."/>
            <person name="Frosch M."/>
            <person name="Fox J.G."/>
        </authorList>
    </citation>
    <scope>NUCLEOTIDE SEQUENCE [LARGE SCALE GENOMIC DNA]</scope>
    <source>
        <strain>ATCC 51449 / 3B1</strain>
    </source>
</reference>
<keyword id="KW-0240">DNA-directed RNA polymerase</keyword>
<keyword id="KW-0548">Nucleotidyltransferase</keyword>
<keyword id="KW-1185">Reference proteome</keyword>
<keyword id="KW-0804">Transcription</keyword>
<keyword id="KW-0808">Transferase</keyword>
<gene>
    <name evidence="2" type="primary">rpoZ</name>
    <name type="ordered locus">HH_0832</name>
</gene>